<keyword id="KW-1003">Cell membrane</keyword>
<keyword id="KW-1015">Disulfide bond</keyword>
<keyword id="KW-0297">G-protein coupled receptor</keyword>
<keyword id="KW-0325">Glycoprotein</keyword>
<keyword id="KW-0333">Golgi apparatus</keyword>
<keyword id="KW-0433">Leucine-rich repeat</keyword>
<keyword id="KW-0472">Membrane</keyword>
<keyword id="KW-0675">Receptor</keyword>
<keyword id="KW-1185">Reference proteome</keyword>
<keyword id="KW-0677">Repeat</keyword>
<keyword id="KW-0732">Signal</keyword>
<keyword id="KW-0807">Transducer</keyword>
<keyword id="KW-0812">Transmembrane</keyword>
<keyword id="KW-1133">Transmembrane helix</keyword>
<accession>E5DHB5</accession>
<proteinExistence type="evidence at transcript level"/>
<reference key="1">
    <citation type="journal article" date="2010" name="PLoS ONE">
        <title>Spatio-temporal expression profile of stem cell-associated gene LGR5 in the intestine during thyroid hormone-dependent metamorphosis in Xenopus laevis.</title>
        <authorList>
            <person name="Sun G."/>
            <person name="Hasebe T."/>
            <person name="Fujimoto K."/>
            <person name="Lu R."/>
            <person name="Fu L."/>
            <person name="Matsuda H."/>
            <person name="Kajita M."/>
            <person name="Ishizuya-Oka A."/>
            <person name="Shi Y.B."/>
        </authorList>
    </citation>
    <scope>NUCLEOTIDE SEQUENCE [MRNA]</scope>
    <scope>TISSUE SPECIFICITY</scope>
    <scope>DEVELOPMENTAL STAGE</scope>
</reference>
<feature type="signal peptide" evidence="2">
    <location>
        <begin position="1"/>
        <end position="22"/>
    </location>
</feature>
<feature type="chain" id="PRO_0000422819" description="Leucine-rich repeat-containing G-protein coupled receptor 5A">
    <location>
        <begin position="23"/>
        <end position="902"/>
    </location>
</feature>
<feature type="topological domain" description="Extracellular" evidence="2">
    <location>
        <begin position="23"/>
        <end position="557"/>
    </location>
</feature>
<feature type="transmembrane region" description="Helical; Name=1" evidence="2">
    <location>
        <begin position="558"/>
        <end position="578"/>
    </location>
</feature>
<feature type="topological domain" description="Cytoplasmic" evidence="2">
    <location>
        <begin position="579"/>
        <end position="589"/>
    </location>
</feature>
<feature type="transmembrane region" description="Helical; Name=2" evidence="2">
    <location>
        <begin position="590"/>
        <end position="610"/>
    </location>
</feature>
<feature type="topological domain" description="Extracellular" evidence="2">
    <location>
        <begin position="611"/>
        <end position="634"/>
    </location>
</feature>
<feature type="transmembrane region" description="Helical; Name=3" evidence="2">
    <location>
        <begin position="635"/>
        <end position="655"/>
    </location>
</feature>
<feature type="topological domain" description="Cytoplasmic" evidence="2">
    <location>
        <begin position="656"/>
        <end position="678"/>
    </location>
</feature>
<feature type="transmembrane region" description="Helical; Name=4" evidence="2">
    <location>
        <begin position="679"/>
        <end position="699"/>
    </location>
</feature>
<feature type="topological domain" description="Extracellular" evidence="2">
    <location>
        <begin position="700"/>
        <end position="718"/>
    </location>
</feature>
<feature type="transmembrane region" description="Helical; Name=5" evidence="2">
    <location>
        <begin position="719"/>
        <end position="739"/>
    </location>
</feature>
<feature type="topological domain" description="Cytoplasmic" evidence="2">
    <location>
        <begin position="740"/>
        <end position="763"/>
    </location>
</feature>
<feature type="transmembrane region" description="Helical; Name=6" evidence="2">
    <location>
        <begin position="764"/>
        <end position="784"/>
    </location>
</feature>
<feature type="topological domain" description="Extracellular" evidence="2">
    <location>
        <begin position="785"/>
        <end position="798"/>
    </location>
</feature>
<feature type="transmembrane region" description="Helical; Name=7" evidence="2">
    <location>
        <begin position="799"/>
        <end position="819"/>
    </location>
</feature>
<feature type="topological domain" description="Cytoplasmic" evidence="2">
    <location>
        <begin position="820"/>
        <end position="902"/>
    </location>
</feature>
<feature type="domain" description="LRRNT">
    <location>
        <begin position="32"/>
        <end position="61"/>
    </location>
</feature>
<feature type="repeat" description="LRR 1">
    <location>
        <begin position="41"/>
        <end position="61"/>
    </location>
</feature>
<feature type="repeat" description="LRR 2">
    <location>
        <begin position="62"/>
        <end position="85"/>
    </location>
</feature>
<feature type="repeat" description="LRR 3">
    <location>
        <begin position="86"/>
        <end position="109"/>
    </location>
</feature>
<feature type="repeat" description="LRR 4">
    <location>
        <begin position="111"/>
        <end position="133"/>
    </location>
</feature>
<feature type="repeat" description="LRR 5">
    <location>
        <begin position="134"/>
        <end position="157"/>
    </location>
</feature>
<feature type="repeat" description="LRR 6">
    <location>
        <begin position="159"/>
        <end position="181"/>
    </location>
</feature>
<feature type="repeat" description="LRR 7">
    <location>
        <begin position="182"/>
        <end position="205"/>
    </location>
</feature>
<feature type="repeat" description="LRR 8">
    <location>
        <begin position="207"/>
        <end position="229"/>
    </location>
</feature>
<feature type="repeat" description="LRR 9">
    <location>
        <begin position="230"/>
        <end position="253"/>
    </location>
</feature>
<feature type="repeat" description="LRR 10">
    <location>
        <begin position="254"/>
        <end position="276"/>
    </location>
</feature>
<feature type="repeat" description="LRR 11">
    <location>
        <begin position="278"/>
        <end position="300"/>
    </location>
</feature>
<feature type="repeat" description="LRR 12">
    <location>
        <begin position="301"/>
        <end position="324"/>
    </location>
</feature>
<feature type="repeat" description="LRR 13">
    <location>
        <begin position="325"/>
        <end position="347"/>
    </location>
</feature>
<feature type="repeat" description="LRR 14">
    <location>
        <begin position="348"/>
        <end position="372"/>
    </location>
</feature>
<feature type="repeat" description="LRR 15">
    <location>
        <begin position="374"/>
        <end position="393"/>
    </location>
</feature>
<feature type="repeat" description="LRR 16">
    <location>
        <begin position="394"/>
        <end position="417"/>
    </location>
</feature>
<feature type="repeat" description="LRR 17">
    <location>
        <begin position="418"/>
        <end position="441"/>
    </location>
</feature>
<feature type="repeat" description="LRR 18">
    <location>
        <begin position="598"/>
        <end position="619"/>
    </location>
</feature>
<feature type="glycosylation site" description="N-linked (GlcNAc...) asparagine" evidence="2">
    <location>
        <position position="60"/>
    </location>
</feature>
<feature type="glycosylation site" description="N-linked (GlcNAc...) asparagine" evidence="2">
    <location>
        <position position="74"/>
    </location>
</feature>
<feature type="glycosylation site" description="N-linked (GlcNAc...) asparagine" evidence="2">
    <location>
        <position position="205"/>
    </location>
</feature>
<feature type="glycosylation site" description="N-linked (GlcNAc...) asparagine" evidence="2">
    <location>
        <position position="496"/>
    </location>
</feature>
<feature type="glycosylation site" description="N-linked (GlcNAc...) asparagine" evidence="2">
    <location>
        <position position="788"/>
    </location>
</feature>
<feature type="glycosylation site" description="N-linked (GlcNAc...) asparagine" evidence="2">
    <location>
        <position position="797"/>
    </location>
</feature>
<feature type="disulfide bond" evidence="3">
    <location>
        <begin position="32"/>
        <end position="38"/>
    </location>
</feature>
<feature type="disulfide bond" evidence="3">
    <location>
        <begin position="36"/>
        <end position="49"/>
    </location>
</feature>
<feature type="disulfide bond" evidence="3">
    <location>
        <begin position="345"/>
        <end position="370"/>
    </location>
</feature>
<feature type="disulfide bond" evidence="3">
    <location>
        <begin position="476"/>
        <end position="537"/>
    </location>
</feature>
<feature type="disulfide bond" evidence="3">
    <location>
        <begin position="633"/>
        <end position="708"/>
    </location>
</feature>
<gene>
    <name type="primary">lgr5-a</name>
</gene>
<sequence length="902" mass="99911">MDTSRTSLFLCSVLYSLQLVGSARPGKQHRSCPTPCECEQDGMLVRVDCSDRGLTGLPRNISIFTSYLDLSMNNITKLPSNALHNLHFLEELRLAGNDLTYIPKGAFAGLGSLKVLMLQNNLLRQVPSEALQNLRSLQSLRLDANHISYVPPSSFNGLFSLRHLWLDDNSLTEIPVRALESLSALQAMTLALNKIHHIPDYAFGNLSSLVVLHLHNNRIYSLGKKCFDGLHSLETLDLNYNNLDEFPAAIKTLKNLKELGFHSNNIKSIPEQAFIGNPSLITTHFYDNPIQHVGRSAFQHLPELRTLILNGASQITEFPDLTGTTSLESLTLTGAQLVYLPSAVCNQLPNLKVIDLSYNHIKDLPSFSGCQRLQKIDLRHNEVYEIRFTTFQQLVGLRSLDLAWNKIAVIHPSSFSSLPSLIKLDLSSNHLTSFPVTGLHGLTHLKLTGNSALQDLIPSEHFPKLRVMEMPYAYQCCAFAVCENLKHSGQMNKDENSSADDFYRKDIGLLHLQDDRDFEDFLLDFEEDVKVLHSVQCTPSAGPFKPCDHLFGSWLTRIGVWLIVLLSFVCNALVIATVFRPLSYVPSIKLLIGLIAIINTLMGLSSGVLATVDALTFGNFAQYGAWWESGVGCQITGFLSVFAAETSVFLLTVAALERGFSIKCTTKFETKSSFLSVKLSIVFCFLLSIIIAVSPLMSGSTYGTSPFCFPLLFGDPSSMVFMVALVLLNSLCFLVMTVAYTKLYCSLEKGELENVWDCSMVKHIALLLFTNCILYCPVAFLSFSSLLNLTFISPEVNKSILLLIIPLPACLNPLLYILFNPHFKEDIGSLKNGDMLWSRSRHTSFASVSSEDAEKQSCDSTQALVTFASSSISFDLPATSSSSSYQMSNNYKLSAVAFVPCH</sequence>
<evidence type="ECO:0000250" key="1"/>
<evidence type="ECO:0000255" key="2"/>
<evidence type="ECO:0000255" key="3">
    <source>
        <dbReference type="PROSITE-ProRule" id="PRU00521"/>
    </source>
</evidence>
<evidence type="ECO:0000269" key="4">
    <source>
    </source>
</evidence>
<comment type="function">
    <text evidence="1">Receptor for R-spondins that potentiates the canonical Wnt signaling pathway and acts as a stem cell marker of the intestinal epithelium and the hair follicle. Upon binding to R-spondins (RSPO1, RSPO2, RSPO3 or RSPO4), associates with phosphorylated LRP6 and frizzled receptors that are activated by extracellular Wnt receptors, triggering the canonical Wnt signaling pathway to increase expression of target genes. In contrast to classical G-protein coupled receptors, does not activate heterotrimeric G-proteins to transduce the signal. Involved in the development and/or maintenance of the adult intestinal stem cells during postembryonic development (By similarity).</text>
</comment>
<comment type="subcellular location">
    <subcellularLocation>
        <location evidence="1">Cell membrane</location>
        <topology evidence="1">Multi-pass membrane protein</topology>
    </subcellularLocation>
    <subcellularLocation>
        <location evidence="1">Golgi apparatus</location>
        <location evidence="1">trans-Golgi network membrane</location>
        <topology evidence="1">Multi-pass membrane protein</topology>
    </subcellularLocation>
    <text evidence="1">Rapidly and constitutively internalized to the trans-Golgi network at steady state.</text>
</comment>
<comment type="tissue specificity">
    <text evidence="4">Expressed in the developing epithelial stem cells of the intestine.</text>
</comment>
<comment type="developmental stage">
    <text evidence="4">Expressed in the limb, tail and intestine by T3 during metamorphosis.</text>
</comment>
<comment type="similarity">
    <text evidence="3">Belongs to the G-protein coupled receptor 1 family.</text>
</comment>
<dbReference type="EMBL" id="GU296021">
    <property type="protein sequence ID" value="ADK66918.1"/>
    <property type="molecule type" value="mRNA"/>
</dbReference>
<dbReference type="RefSeq" id="NP_001186152.1">
    <property type="nucleotide sequence ID" value="NM_001199223.1"/>
</dbReference>
<dbReference type="SMR" id="E5DHB5"/>
<dbReference type="GlyCosmos" id="E5DHB5">
    <property type="glycosylation" value="6 sites, No reported glycans"/>
</dbReference>
<dbReference type="GeneID" id="100526795"/>
<dbReference type="KEGG" id="xla:100526795"/>
<dbReference type="AGR" id="Xenbase:XB-GENE-11536385"/>
<dbReference type="CTD" id="100526795"/>
<dbReference type="Xenbase" id="XB-GENE-11536385">
    <property type="gene designation" value="lgr5.L"/>
</dbReference>
<dbReference type="OrthoDB" id="1883493at2759"/>
<dbReference type="Proteomes" id="UP000186698">
    <property type="component" value="Chromosome 3L"/>
</dbReference>
<dbReference type="Bgee" id="100526795">
    <property type="expression patterns" value="Expressed in internal ear and 12 other cell types or tissues"/>
</dbReference>
<dbReference type="GO" id="GO:0005886">
    <property type="term" value="C:plasma membrane"/>
    <property type="evidence" value="ECO:0000250"/>
    <property type="project" value="UniProtKB"/>
</dbReference>
<dbReference type="GO" id="GO:0032588">
    <property type="term" value="C:trans-Golgi network membrane"/>
    <property type="evidence" value="ECO:0000250"/>
    <property type="project" value="UniProtKB"/>
</dbReference>
<dbReference type="GO" id="GO:0016500">
    <property type="term" value="F:protein-hormone receptor activity"/>
    <property type="evidence" value="ECO:0007669"/>
    <property type="project" value="InterPro"/>
</dbReference>
<dbReference type="GO" id="GO:0004888">
    <property type="term" value="F:transmembrane signaling receptor activity"/>
    <property type="evidence" value="ECO:0000250"/>
    <property type="project" value="UniProtKB"/>
</dbReference>
<dbReference type="GO" id="GO:0007189">
    <property type="term" value="P:adenylate cyclase-activating G protein-coupled receptor signaling pathway"/>
    <property type="evidence" value="ECO:0007669"/>
    <property type="project" value="TreeGrafter"/>
</dbReference>
<dbReference type="GO" id="GO:0009755">
    <property type="term" value="P:hormone-mediated signaling pathway"/>
    <property type="evidence" value="ECO:0007669"/>
    <property type="project" value="TreeGrafter"/>
</dbReference>
<dbReference type="GO" id="GO:0090263">
    <property type="term" value="P:positive regulation of canonical Wnt signaling pathway"/>
    <property type="evidence" value="ECO:0000250"/>
    <property type="project" value="UniProtKB"/>
</dbReference>
<dbReference type="CDD" id="cd15363">
    <property type="entry name" value="7tmA_LGR5"/>
    <property type="match status" value="1"/>
</dbReference>
<dbReference type="FunFam" id="1.20.1070.10:FF:000028">
    <property type="entry name" value="leucine-rich repeat-containing G-protein coupled receptor 4 isoform X1"/>
    <property type="match status" value="1"/>
</dbReference>
<dbReference type="FunFam" id="3.80.10.10:FF:000028">
    <property type="entry name" value="leucine-rich repeat-containing G-protein coupled receptor 4 isoform X1"/>
    <property type="match status" value="1"/>
</dbReference>
<dbReference type="Gene3D" id="1.20.1070.10">
    <property type="entry name" value="Rhodopsin 7-helix transmembrane proteins"/>
    <property type="match status" value="1"/>
</dbReference>
<dbReference type="Gene3D" id="3.80.10.10">
    <property type="entry name" value="Ribonuclease Inhibitor"/>
    <property type="match status" value="1"/>
</dbReference>
<dbReference type="InterPro" id="IPR000276">
    <property type="entry name" value="GPCR_Rhodpsn"/>
</dbReference>
<dbReference type="InterPro" id="IPR017452">
    <property type="entry name" value="GPCR_Rhodpsn_7TM"/>
</dbReference>
<dbReference type="InterPro" id="IPR002131">
    <property type="entry name" value="Gphrmn_rcpt_fam"/>
</dbReference>
<dbReference type="InterPro" id="IPR001611">
    <property type="entry name" value="Leu-rich_rpt"/>
</dbReference>
<dbReference type="InterPro" id="IPR003591">
    <property type="entry name" value="Leu-rich_rpt_typical-subtyp"/>
</dbReference>
<dbReference type="InterPro" id="IPR032675">
    <property type="entry name" value="LRR_dom_sf"/>
</dbReference>
<dbReference type="InterPro" id="IPR000372">
    <property type="entry name" value="LRRNT"/>
</dbReference>
<dbReference type="PANTHER" id="PTHR24372">
    <property type="entry name" value="GLYCOPROTEIN HORMONE RECEPTOR"/>
    <property type="match status" value="1"/>
</dbReference>
<dbReference type="Pfam" id="PF00001">
    <property type="entry name" value="7tm_1"/>
    <property type="match status" value="1"/>
</dbReference>
<dbReference type="Pfam" id="PF13855">
    <property type="entry name" value="LRR_8"/>
    <property type="match status" value="5"/>
</dbReference>
<dbReference type="Pfam" id="PF01462">
    <property type="entry name" value="LRRNT"/>
    <property type="match status" value="1"/>
</dbReference>
<dbReference type="PRINTS" id="PR00373">
    <property type="entry name" value="GLYCHORMONER"/>
</dbReference>
<dbReference type="PRINTS" id="PR00237">
    <property type="entry name" value="GPCRRHODOPSN"/>
</dbReference>
<dbReference type="SMART" id="SM00364">
    <property type="entry name" value="LRR_BAC"/>
    <property type="match status" value="6"/>
</dbReference>
<dbReference type="SMART" id="SM00365">
    <property type="entry name" value="LRR_SD22"/>
    <property type="match status" value="5"/>
</dbReference>
<dbReference type="SMART" id="SM00369">
    <property type="entry name" value="LRR_TYP"/>
    <property type="match status" value="14"/>
</dbReference>
<dbReference type="SMART" id="SM00013">
    <property type="entry name" value="LRRNT"/>
    <property type="match status" value="1"/>
</dbReference>
<dbReference type="SUPFAM" id="SSF81321">
    <property type="entry name" value="Family A G protein-coupled receptor-like"/>
    <property type="match status" value="1"/>
</dbReference>
<dbReference type="SUPFAM" id="SSF52047">
    <property type="entry name" value="RNI-like"/>
    <property type="match status" value="1"/>
</dbReference>
<dbReference type="PROSITE" id="PS50262">
    <property type="entry name" value="G_PROTEIN_RECEP_F1_2"/>
    <property type="match status" value="1"/>
</dbReference>
<dbReference type="PROSITE" id="PS51450">
    <property type="entry name" value="LRR"/>
    <property type="match status" value="14"/>
</dbReference>
<protein>
    <recommendedName>
        <fullName>Leucine-rich repeat-containing G-protein coupled receptor 5A</fullName>
        <shortName>LGR5a</shortName>
    </recommendedName>
</protein>
<name>LGR5A_XENLA</name>
<organism>
    <name type="scientific">Xenopus laevis</name>
    <name type="common">African clawed frog</name>
    <dbReference type="NCBI Taxonomy" id="8355"/>
    <lineage>
        <taxon>Eukaryota</taxon>
        <taxon>Metazoa</taxon>
        <taxon>Chordata</taxon>
        <taxon>Craniata</taxon>
        <taxon>Vertebrata</taxon>
        <taxon>Euteleostomi</taxon>
        <taxon>Amphibia</taxon>
        <taxon>Batrachia</taxon>
        <taxon>Anura</taxon>
        <taxon>Pipoidea</taxon>
        <taxon>Pipidae</taxon>
        <taxon>Xenopodinae</taxon>
        <taxon>Xenopus</taxon>
        <taxon>Xenopus</taxon>
    </lineage>
</organism>